<keyword id="KW-1185">Reference proteome</keyword>
<keyword id="KW-0687">Ribonucleoprotein</keyword>
<keyword id="KW-0689">Ribosomal protein</keyword>
<keyword id="KW-0694">RNA-binding</keyword>
<keyword id="KW-0699">rRNA-binding</keyword>
<dbReference type="EMBL" id="CP000542">
    <property type="protein sequence ID" value="ABM58010.1"/>
    <property type="molecule type" value="Genomic_DNA"/>
</dbReference>
<dbReference type="RefSeq" id="WP_011810013.1">
    <property type="nucleotide sequence ID" value="NC_008786.1"/>
</dbReference>
<dbReference type="SMR" id="A1WK53"/>
<dbReference type="STRING" id="391735.Veis_2262"/>
<dbReference type="GeneID" id="76460825"/>
<dbReference type="KEGG" id="vei:Veis_2262"/>
<dbReference type="eggNOG" id="COG0244">
    <property type="taxonomic scope" value="Bacteria"/>
</dbReference>
<dbReference type="HOGENOM" id="CLU_092227_0_0_4"/>
<dbReference type="OrthoDB" id="9808307at2"/>
<dbReference type="Proteomes" id="UP000000374">
    <property type="component" value="Chromosome"/>
</dbReference>
<dbReference type="GO" id="GO:0015934">
    <property type="term" value="C:large ribosomal subunit"/>
    <property type="evidence" value="ECO:0007669"/>
    <property type="project" value="InterPro"/>
</dbReference>
<dbReference type="GO" id="GO:0070180">
    <property type="term" value="F:large ribosomal subunit rRNA binding"/>
    <property type="evidence" value="ECO:0007669"/>
    <property type="project" value="UniProtKB-UniRule"/>
</dbReference>
<dbReference type="GO" id="GO:0003735">
    <property type="term" value="F:structural constituent of ribosome"/>
    <property type="evidence" value="ECO:0007669"/>
    <property type="project" value="InterPro"/>
</dbReference>
<dbReference type="GO" id="GO:0006412">
    <property type="term" value="P:translation"/>
    <property type="evidence" value="ECO:0007669"/>
    <property type="project" value="UniProtKB-UniRule"/>
</dbReference>
<dbReference type="CDD" id="cd05797">
    <property type="entry name" value="Ribosomal_L10"/>
    <property type="match status" value="1"/>
</dbReference>
<dbReference type="Gene3D" id="3.30.70.1730">
    <property type="match status" value="1"/>
</dbReference>
<dbReference type="Gene3D" id="6.10.250.290">
    <property type="match status" value="1"/>
</dbReference>
<dbReference type="HAMAP" id="MF_00362">
    <property type="entry name" value="Ribosomal_uL10"/>
    <property type="match status" value="1"/>
</dbReference>
<dbReference type="InterPro" id="IPR001790">
    <property type="entry name" value="Ribosomal_uL10"/>
</dbReference>
<dbReference type="InterPro" id="IPR043141">
    <property type="entry name" value="Ribosomal_uL10-like_sf"/>
</dbReference>
<dbReference type="InterPro" id="IPR022973">
    <property type="entry name" value="Ribosomal_uL10_bac"/>
</dbReference>
<dbReference type="InterPro" id="IPR047865">
    <property type="entry name" value="Ribosomal_uL10_bac_type"/>
</dbReference>
<dbReference type="InterPro" id="IPR002363">
    <property type="entry name" value="Ribosomal_uL10_CS_bac"/>
</dbReference>
<dbReference type="NCBIfam" id="NF000955">
    <property type="entry name" value="PRK00099.1-1"/>
    <property type="match status" value="1"/>
</dbReference>
<dbReference type="PANTHER" id="PTHR11560">
    <property type="entry name" value="39S RIBOSOMAL PROTEIN L10, MITOCHONDRIAL"/>
    <property type="match status" value="1"/>
</dbReference>
<dbReference type="Pfam" id="PF00466">
    <property type="entry name" value="Ribosomal_L10"/>
    <property type="match status" value="1"/>
</dbReference>
<dbReference type="SUPFAM" id="SSF160369">
    <property type="entry name" value="Ribosomal protein L10-like"/>
    <property type="match status" value="1"/>
</dbReference>
<dbReference type="PROSITE" id="PS01109">
    <property type="entry name" value="RIBOSOMAL_L10"/>
    <property type="match status" value="1"/>
</dbReference>
<feature type="chain" id="PRO_1000005616" description="Large ribosomal subunit protein uL10">
    <location>
        <begin position="1"/>
        <end position="174"/>
    </location>
</feature>
<comment type="function">
    <text evidence="1">Forms part of the ribosomal stalk, playing a central role in the interaction of the ribosome with GTP-bound translation factors.</text>
</comment>
<comment type="subunit">
    <text evidence="1">Part of the ribosomal stalk of the 50S ribosomal subunit. The N-terminus interacts with L11 and the large rRNA to form the base of the stalk. The C-terminus forms an elongated spine to which L12 dimers bind in a sequential fashion forming a multimeric L10(L12)X complex.</text>
</comment>
<comment type="similarity">
    <text evidence="1">Belongs to the universal ribosomal protein uL10 family.</text>
</comment>
<organism>
    <name type="scientific">Verminephrobacter eiseniae (strain EF01-2)</name>
    <dbReference type="NCBI Taxonomy" id="391735"/>
    <lineage>
        <taxon>Bacteria</taxon>
        <taxon>Pseudomonadati</taxon>
        <taxon>Pseudomonadota</taxon>
        <taxon>Betaproteobacteria</taxon>
        <taxon>Burkholderiales</taxon>
        <taxon>Comamonadaceae</taxon>
        <taxon>Verminephrobacter</taxon>
    </lineage>
</organism>
<proteinExistence type="inferred from homology"/>
<sequence length="174" mass="18063">MSLQRSEKEAVISEVSRLVAKAQTLVLAEYRGITVADMTKLRVQARSNGVRLSVLKNTLARRAVAGSAFDVLAGQMTGPLIYGFSEDAVAAAKVVAEFAKTNDKLVIRAGAFAGKALDVNGVKQLASIPSKEVLLAQLCGLLMSPISRTAVVLSALAAKKGEGEGVGQAQAVPA</sequence>
<evidence type="ECO:0000255" key="1">
    <source>
        <dbReference type="HAMAP-Rule" id="MF_00362"/>
    </source>
</evidence>
<evidence type="ECO:0000305" key="2"/>
<reference key="1">
    <citation type="submission" date="2006-12" db="EMBL/GenBank/DDBJ databases">
        <title>Complete sequence of chromosome 1 of Verminephrobacter eiseniae EF01-2.</title>
        <authorList>
            <person name="Copeland A."/>
            <person name="Lucas S."/>
            <person name="Lapidus A."/>
            <person name="Barry K."/>
            <person name="Detter J.C."/>
            <person name="Glavina del Rio T."/>
            <person name="Dalin E."/>
            <person name="Tice H."/>
            <person name="Pitluck S."/>
            <person name="Chertkov O."/>
            <person name="Brettin T."/>
            <person name="Bruce D."/>
            <person name="Han C."/>
            <person name="Tapia R."/>
            <person name="Gilna P."/>
            <person name="Schmutz J."/>
            <person name="Larimer F."/>
            <person name="Land M."/>
            <person name="Hauser L."/>
            <person name="Kyrpides N."/>
            <person name="Kim E."/>
            <person name="Stahl D."/>
            <person name="Richardson P."/>
        </authorList>
    </citation>
    <scope>NUCLEOTIDE SEQUENCE [LARGE SCALE GENOMIC DNA]</scope>
    <source>
        <strain>EF01-2</strain>
    </source>
</reference>
<accession>A1WK53</accession>
<name>RL10_VEREI</name>
<gene>
    <name evidence="1" type="primary">rplJ</name>
    <name type="ordered locus">Veis_2262</name>
</gene>
<protein>
    <recommendedName>
        <fullName evidence="1">Large ribosomal subunit protein uL10</fullName>
    </recommendedName>
    <alternativeName>
        <fullName evidence="2">50S ribosomal protein L10</fullName>
    </alternativeName>
</protein>